<name>RFBE_SHIFL</name>
<sequence>MSIIKNSVWNLFGYAIPTLIAIPSLGFLARGLGPEGFGVYTIAIALVGYAGIFDVGLTRSVIREIAIHRDNHHERTKVISTSTSFLVLFSCFGAFLLLIFSDGIVNYLKISGVEHSDIQLAFKLLAICIPLFILNQLWSAILEGDEKFGIVNIQKSISSSCIAGIPAIFVFYSATLSAAVAGLIFARVISILVSAYYVRNDIKISGVHFCYKTFKRLFFFGGWMTVSNIISPVMVYFDRFIVSNIMGADKVAFYSAPAEVILKLGIIPAAIGRAVFPRLSNIKDFKEFKRNVNKSLLLMFLICLPVIIIGLLYSGLVLKIWFGENYQINSFNILNVLLIGFFFNALAMIPFSAIQALGKSKITALIHCAELVPYLALLYFMVEKYGLLGAAISWSIRVILDALLLQWLYTRMCSVYEN</sequence>
<evidence type="ECO:0000255" key="1"/>
<evidence type="ECO:0000305" key="2"/>
<accession>P37781</accession>
<organism>
    <name type="scientific">Shigella flexneri</name>
    <dbReference type="NCBI Taxonomy" id="623"/>
    <lineage>
        <taxon>Bacteria</taxon>
        <taxon>Pseudomonadati</taxon>
        <taxon>Pseudomonadota</taxon>
        <taxon>Gammaproteobacteria</taxon>
        <taxon>Enterobacterales</taxon>
        <taxon>Enterobacteriaceae</taxon>
        <taxon>Shigella</taxon>
    </lineage>
</organism>
<comment type="function">
    <text>Could be an O-antigen transporter.</text>
</comment>
<comment type="pathway">
    <text>Bacterial outer membrane biogenesis; lipopolysaccharide biosynthesis.</text>
</comment>
<comment type="subcellular location">
    <subcellularLocation>
        <location evidence="2">Cell inner membrane</location>
        <topology evidence="2">Multi-pass membrane protein</topology>
    </subcellularLocation>
</comment>
<comment type="similarity">
    <text evidence="2">Belongs to the polysaccharide synthase family.</text>
</comment>
<dbReference type="EMBL" id="X71970">
    <property type="protein sequence ID" value="CAA50771.1"/>
    <property type="molecule type" value="Genomic_DNA"/>
</dbReference>
<dbReference type="EMBL" id="AE005674">
    <property type="protein sequence ID" value="AAN43639.1"/>
    <property type="molecule type" value="Genomic_DNA"/>
</dbReference>
<dbReference type="EMBL" id="AE014073">
    <property type="protein sequence ID" value="AAP17468.1"/>
    <property type="molecule type" value="Genomic_DNA"/>
</dbReference>
<dbReference type="PIR" id="JC4069">
    <property type="entry name" value="JC4069"/>
</dbReference>
<dbReference type="RefSeq" id="NP_707932.1">
    <property type="nucleotide sequence ID" value="NC_004337.2"/>
</dbReference>
<dbReference type="SMR" id="P37781"/>
<dbReference type="STRING" id="198214.SF2100"/>
<dbReference type="PaxDb" id="198214-SF2100"/>
<dbReference type="GeneID" id="1026640"/>
<dbReference type="KEGG" id="sfl:SF2100"/>
<dbReference type="KEGG" id="sfx:S2222"/>
<dbReference type="PATRIC" id="fig|198214.7.peg.2508"/>
<dbReference type="HOGENOM" id="CLU_040633_0_0_6"/>
<dbReference type="UniPathway" id="UPA00030"/>
<dbReference type="Proteomes" id="UP000001006">
    <property type="component" value="Chromosome"/>
</dbReference>
<dbReference type="Proteomes" id="UP000002673">
    <property type="component" value="Chromosome"/>
</dbReference>
<dbReference type="GO" id="GO:0005886">
    <property type="term" value="C:plasma membrane"/>
    <property type="evidence" value="ECO:0007669"/>
    <property type="project" value="UniProtKB-SubCell"/>
</dbReference>
<dbReference type="GO" id="GO:0009103">
    <property type="term" value="P:lipopolysaccharide biosynthetic process"/>
    <property type="evidence" value="ECO:0007669"/>
    <property type="project" value="UniProtKB-UniPathway"/>
</dbReference>
<dbReference type="CDD" id="cd13128">
    <property type="entry name" value="MATE_Wzx_like"/>
    <property type="match status" value="1"/>
</dbReference>
<dbReference type="InterPro" id="IPR050833">
    <property type="entry name" value="Poly_Biosynth_Transport"/>
</dbReference>
<dbReference type="InterPro" id="IPR002797">
    <property type="entry name" value="Polysacc_synth"/>
</dbReference>
<dbReference type="PANTHER" id="PTHR30250:SF11">
    <property type="entry name" value="O-ANTIGEN TRANSPORTER-RELATED"/>
    <property type="match status" value="1"/>
</dbReference>
<dbReference type="PANTHER" id="PTHR30250">
    <property type="entry name" value="PST FAMILY PREDICTED COLANIC ACID TRANSPORTER"/>
    <property type="match status" value="1"/>
</dbReference>
<dbReference type="Pfam" id="PF01943">
    <property type="entry name" value="Polysacc_synt"/>
    <property type="match status" value="1"/>
</dbReference>
<protein>
    <recommendedName>
        <fullName>Putative O-antigen transporter</fullName>
    </recommendedName>
</protein>
<keyword id="KW-0997">Cell inner membrane</keyword>
<keyword id="KW-1003">Cell membrane</keyword>
<keyword id="KW-0448">Lipopolysaccharide biosynthesis</keyword>
<keyword id="KW-0472">Membrane</keyword>
<keyword id="KW-1185">Reference proteome</keyword>
<keyword id="KW-0812">Transmembrane</keyword>
<keyword id="KW-1133">Transmembrane helix</keyword>
<reference key="1">
    <citation type="journal article" date="1994" name="J. Bacteriol.">
        <title>Characterization of the rfc region of Shigella flexneri.</title>
        <authorList>
            <person name="Morona R."/>
            <person name="Mavris M."/>
            <person name="Fallarino A."/>
            <person name="Manning P.A."/>
        </authorList>
    </citation>
    <scope>NUCLEOTIDE SEQUENCE [GENOMIC DNA]</scope>
    <source>
        <strain>PE577 / Serotype 2a</strain>
    </source>
</reference>
<reference key="2">
    <citation type="journal article" date="2002" name="Nucleic Acids Res.">
        <title>Genome sequence of Shigella flexneri 2a: insights into pathogenicity through comparison with genomes of Escherichia coli K12 and O157.</title>
        <authorList>
            <person name="Jin Q."/>
            <person name="Yuan Z."/>
            <person name="Xu J."/>
            <person name="Wang Y."/>
            <person name="Shen Y."/>
            <person name="Lu W."/>
            <person name="Wang J."/>
            <person name="Liu H."/>
            <person name="Yang J."/>
            <person name="Yang F."/>
            <person name="Zhang X."/>
            <person name="Zhang J."/>
            <person name="Yang G."/>
            <person name="Wu H."/>
            <person name="Qu D."/>
            <person name="Dong J."/>
            <person name="Sun L."/>
            <person name="Xue Y."/>
            <person name="Zhao A."/>
            <person name="Gao Y."/>
            <person name="Zhu J."/>
            <person name="Kan B."/>
            <person name="Ding K."/>
            <person name="Chen S."/>
            <person name="Cheng H."/>
            <person name="Yao Z."/>
            <person name="He B."/>
            <person name="Chen R."/>
            <person name="Ma D."/>
            <person name="Qiang B."/>
            <person name="Wen Y."/>
            <person name="Hou Y."/>
            <person name="Yu J."/>
        </authorList>
    </citation>
    <scope>NUCLEOTIDE SEQUENCE [LARGE SCALE GENOMIC DNA]</scope>
    <source>
        <strain>301 / Serotype 2a</strain>
    </source>
</reference>
<reference key="3">
    <citation type="journal article" date="2003" name="Infect. Immun.">
        <title>Complete genome sequence and comparative genomics of Shigella flexneri serotype 2a strain 2457T.</title>
        <authorList>
            <person name="Wei J."/>
            <person name="Goldberg M.B."/>
            <person name="Burland V."/>
            <person name="Venkatesan M.M."/>
            <person name="Deng W."/>
            <person name="Fournier G."/>
            <person name="Mayhew G.F."/>
            <person name="Plunkett G. III"/>
            <person name="Rose D.J."/>
            <person name="Darling A."/>
            <person name="Mau B."/>
            <person name="Perna N.T."/>
            <person name="Payne S.M."/>
            <person name="Runyen-Janecky L.J."/>
            <person name="Zhou S."/>
            <person name="Schwartz D.C."/>
            <person name="Blattner F.R."/>
        </authorList>
    </citation>
    <scope>NUCLEOTIDE SEQUENCE [LARGE SCALE GENOMIC DNA]</scope>
    <source>
        <strain>ATCC 700930 / 2457T / Serotype 2a</strain>
    </source>
</reference>
<gene>
    <name type="primary">rfbE</name>
    <name type="ordered locus">SF2100</name>
    <name type="ordered locus">S2222</name>
</gene>
<proteinExistence type="inferred from homology"/>
<feature type="chain" id="PRO_0000166448" description="Putative O-antigen transporter">
    <location>
        <begin position="1"/>
        <end position="418"/>
    </location>
</feature>
<feature type="transmembrane region" description="Helical" evidence="1">
    <location>
        <begin position="8"/>
        <end position="28"/>
    </location>
</feature>
<feature type="transmembrane region" description="Helical" evidence="1">
    <location>
        <begin position="37"/>
        <end position="57"/>
    </location>
</feature>
<feature type="transmembrane region" description="Helical" evidence="1">
    <location>
        <begin position="85"/>
        <end position="105"/>
    </location>
</feature>
<feature type="transmembrane region" description="Helical" evidence="1">
    <location>
        <begin position="124"/>
        <end position="144"/>
    </location>
</feature>
<feature type="transmembrane region" description="Helical" evidence="1">
    <location>
        <begin position="165"/>
        <end position="185"/>
    </location>
</feature>
<feature type="transmembrane region" description="Helical" evidence="1">
    <location>
        <begin position="217"/>
        <end position="237"/>
    </location>
</feature>
<feature type="transmembrane region" description="Helical" evidence="1">
    <location>
        <begin position="251"/>
        <end position="271"/>
    </location>
</feature>
<feature type="transmembrane region" description="Helical" evidence="1">
    <location>
        <begin position="297"/>
        <end position="317"/>
    </location>
</feature>
<feature type="transmembrane region" description="Helical" evidence="1">
    <location>
        <begin position="334"/>
        <end position="354"/>
    </location>
</feature>
<feature type="transmembrane region" description="Helical" evidence="1">
    <location>
        <begin position="362"/>
        <end position="382"/>
    </location>
</feature>
<feature type="transmembrane region" description="Helical" evidence="1">
    <location>
        <begin position="385"/>
        <end position="405"/>
    </location>
</feature>
<feature type="sequence conflict" description="In Ref. 1; CAA50771." evidence="2" ref="1">
    <original>D</original>
    <variation>E</variation>
    <location>
        <position position="249"/>
    </location>
</feature>
<feature type="sequence conflict" description="In Ref. 1; CAA50771." evidence="2" ref="1">
    <original>E</original>
    <variation>A</variation>
    <location>
        <position position="287"/>
    </location>
</feature>